<dbReference type="EMBL" id="AF190979">
    <property type="protein sequence ID" value="AAF73835.1"/>
    <property type="molecule type" value="mRNA"/>
</dbReference>
<dbReference type="EMBL" id="AF190981">
    <property type="protein sequence ID" value="AAF73837.1"/>
    <property type="molecule type" value="mRNA"/>
</dbReference>
<dbReference type="EMBL" id="AF190982">
    <property type="protein sequence ID" value="AAF73838.1"/>
    <property type="molecule type" value="mRNA"/>
</dbReference>
<dbReference type="EMBL" id="AF190984">
    <property type="protein sequence ID" value="AAF73840.1"/>
    <property type="molecule type" value="mRNA"/>
</dbReference>
<dbReference type="SMR" id="Q9MZJ3"/>
<dbReference type="FunCoup" id="Q9MZJ3">
    <property type="interactions" value="198"/>
</dbReference>
<dbReference type="GlyCosmos" id="Q9MZJ3">
    <property type="glycosylation" value="3 sites, No reported glycans"/>
</dbReference>
<dbReference type="PaxDb" id="9544-ENSMMUP00000024076"/>
<dbReference type="eggNOG" id="ENOG502S6IE">
    <property type="taxonomic scope" value="Eukaryota"/>
</dbReference>
<dbReference type="InParanoid" id="Q9MZJ3"/>
<dbReference type="Proteomes" id="UP000006718">
    <property type="component" value="Unassembled WGS sequence"/>
</dbReference>
<dbReference type="GO" id="GO:0009897">
    <property type="term" value="C:external side of plasma membrane"/>
    <property type="evidence" value="ECO:0000318"/>
    <property type="project" value="GO_Central"/>
</dbReference>
<dbReference type="GO" id="GO:0005886">
    <property type="term" value="C:plasma membrane"/>
    <property type="evidence" value="ECO:0000250"/>
    <property type="project" value="UniProtKB"/>
</dbReference>
<dbReference type="GO" id="GO:0030246">
    <property type="term" value="F:carbohydrate binding"/>
    <property type="evidence" value="ECO:0007669"/>
    <property type="project" value="UniProtKB-KW"/>
</dbReference>
<dbReference type="GO" id="GO:0062082">
    <property type="term" value="F:HLA-E specific inhibitory MHC class Ib receptor activity"/>
    <property type="evidence" value="ECO:0000250"/>
    <property type="project" value="UniProtKB"/>
</dbReference>
<dbReference type="GO" id="GO:0004888">
    <property type="term" value="F:transmembrane signaling receptor activity"/>
    <property type="evidence" value="ECO:0000318"/>
    <property type="project" value="GO_Central"/>
</dbReference>
<dbReference type="GO" id="GO:0002250">
    <property type="term" value="P:adaptive immune response"/>
    <property type="evidence" value="ECO:0007669"/>
    <property type="project" value="UniProtKB-KW"/>
</dbReference>
<dbReference type="GO" id="GO:0002305">
    <property type="term" value="P:CD8-positive, gamma-delta intraepithelial T cell differentiation"/>
    <property type="evidence" value="ECO:0000250"/>
    <property type="project" value="UniProtKB"/>
</dbReference>
<dbReference type="GO" id="GO:0045087">
    <property type="term" value="P:innate immune response"/>
    <property type="evidence" value="ECO:0007669"/>
    <property type="project" value="UniProtKB-KW"/>
</dbReference>
<dbReference type="GO" id="GO:0045953">
    <property type="term" value="P:negative regulation of natural killer cell mediated cytotoxicity"/>
    <property type="evidence" value="ECO:0000250"/>
    <property type="project" value="UniProtKB"/>
</dbReference>
<dbReference type="GO" id="GO:0001915">
    <property type="term" value="P:negative regulation of T cell mediated cytotoxicity"/>
    <property type="evidence" value="ECO:0000250"/>
    <property type="project" value="UniProtKB"/>
</dbReference>
<dbReference type="GO" id="GO:0045954">
    <property type="term" value="P:positive regulation of natural killer cell mediated cytotoxicity"/>
    <property type="evidence" value="ECO:0000318"/>
    <property type="project" value="GO_Central"/>
</dbReference>
<dbReference type="GO" id="GO:0002223">
    <property type="term" value="P:stimulatory C-type lectin receptor signaling pathway"/>
    <property type="evidence" value="ECO:0000318"/>
    <property type="project" value="GO_Central"/>
</dbReference>
<dbReference type="CDD" id="cd03593">
    <property type="entry name" value="CLECT_NK_receptors_like"/>
    <property type="match status" value="1"/>
</dbReference>
<dbReference type="Gene3D" id="3.10.100.10">
    <property type="entry name" value="Mannose-Binding Protein A, subunit A"/>
    <property type="match status" value="1"/>
</dbReference>
<dbReference type="Gene3D" id="1.10.287.770">
    <property type="entry name" value="YojJ-like"/>
    <property type="match status" value="1"/>
</dbReference>
<dbReference type="InterPro" id="IPR001304">
    <property type="entry name" value="C-type_lectin-like"/>
</dbReference>
<dbReference type="InterPro" id="IPR016186">
    <property type="entry name" value="C-type_lectin-like/link_sf"/>
</dbReference>
<dbReference type="InterPro" id="IPR016187">
    <property type="entry name" value="CTDL_fold"/>
</dbReference>
<dbReference type="InterPro" id="IPR050919">
    <property type="entry name" value="NKG2/CD94_NK_receptors"/>
</dbReference>
<dbReference type="InterPro" id="IPR033992">
    <property type="entry name" value="NKR-like_CTLD"/>
</dbReference>
<dbReference type="PANTHER" id="PTHR22800">
    <property type="entry name" value="C-TYPE LECTIN PROTEINS"/>
    <property type="match status" value="1"/>
</dbReference>
<dbReference type="PANTHER" id="PTHR22800:SF242">
    <property type="entry name" value="NKG2-A_NKG2-B TYPE II INTEGRAL MEMBRANE PROTEIN"/>
    <property type="match status" value="1"/>
</dbReference>
<dbReference type="Pfam" id="PF00059">
    <property type="entry name" value="Lectin_C"/>
    <property type="match status" value="1"/>
</dbReference>
<dbReference type="SMART" id="SM00034">
    <property type="entry name" value="CLECT"/>
    <property type="match status" value="1"/>
</dbReference>
<dbReference type="SUPFAM" id="SSF56436">
    <property type="entry name" value="C-type lectin-like"/>
    <property type="match status" value="1"/>
</dbReference>
<dbReference type="PROSITE" id="PS50041">
    <property type="entry name" value="C_TYPE_LECTIN_2"/>
    <property type="match status" value="1"/>
</dbReference>
<name>NKG2A_MACMU</name>
<gene>
    <name type="primary">NKG2A</name>
</gene>
<protein>
    <recommendedName>
        <fullName>NKG2-A/NKG2-B type II integral membrane protein</fullName>
    </recommendedName>
    <alternativeName>
        <fullName>CD159 antigen-like family member A</fullName>
    </alternativeName>
    <alternativeName>
        <fullName>NK cell receptor A</fullName>
    </alternativeName>
    <alternativeName>
        <fullName>NKG2-A/B-activating NK receptor</fullName>
    </alternativeName>
    <cdAntigenName>CD159a</cdAntigenName>
</protein>
<evidence type="ECO:0000250" key="1">
    <source>
        <dbReference type="UniProtKB" id="P26715"/>
    </source>
</evidence>
<evidence type="ECO:0000255" key="2"/>
<evidence type="ECO:0000255" key="3">
    <source>
        <dbReference type="PROSITE-ProRule" id="PRU00040"/>
    </source>
</evidence>
<evidence type="ECO:0000256" key="4">
    <source>
        <dbReference type="SAM" id="MobiDB-lite"/>
    </source>
</evidence>
<evidence type="ECO:0000303" key="5">
    <source>
    </source>
</evidence>
<accession>Q9MZJ3</accession>
<accession>Q9MZI8</accession>
<accession>Q9MZJ0</accession>
<accession>Q9MZJ1</accession>
<keyword id="KW-1064">Adaptive immunity</keyword>
<keyword id="KW-0025">Alternative splicing</keyword>
<keyword id="KW-1003">Cell membrane</keyword>
<keyword id="KW-1015">Disulfide bond</keyword>
<keyword id="KW-0325">Glycoprotein</keyword>
<keyword id="KW-0391">Immunity</keyword>
<keyword id="KW-0399">Innate immunity</keyword>
<keyword id="KW-0430">Lectin</keyword>
<keyword id="KW-0472">Membrane</keyword>
<keyword id="KW-0597">Phosphoprotein</keyword>
<keyword id="KW-0675">Receptor</keyword>
<keyword id="KW-1185">Reference proteome</keyword>
<keyword id="KW-0735">Signal-anchor</keyword>
<keyword id="KW-0812">Transmembrane</keyword>
<keyword id="KW-1133">Transmembrane helix</keyword>
<organism>
    <name type="scientific">Macaca mulatta</name>
    <name type="common">Rhesus macaque</name>
    <dbReference type="NCBI Taxonomy" id="9544"/>
    <lineage>
        <taxon>Eukaryota</taxon>
        <taxon>Metazoa</taxon>
        <taxon>Chordata</taxon>
        <taxon>Craniata</taxon>
        <taxon>Vertebrata</taxon>
        <taxon>Euteleostomi</taxon>
        <taxon>Mammalia</taxon>
        <taxon>Eutheria</taxon>
        <taxon>Euarchontoglires</taxon>
        <taxon>Primates</taxon>
        <taxon>Haplorrhini</taxon>
        <taxon>Catarrhini</taxon>
        <taxon>Cercopithecidae</taxon>
        <taxon>Cercopithecinae</taxon>
        <taxon>Macaca</taxon>
    </lineage>
</organism>
<reference key="1">
    <citation type="journal article" date="2000" name="Immunogenetics">
        <title>Characterization of rhesus monkey CD94/NKG2 family members and identification of novel transmembrane-deleted forms of NKG2-A, B, C, and D.</title>
        <authorList>
            <person name="LaBonte M.L."/>
            <person name="Levy D.B."/>
            <person name="Letvin N.L."/>
        </authorList>
    </citation>
    <scope>NUCLEOTIDE SEQUENCE [MRNA] (ISOFORMS NKG2-A; NKG2-ADTM; NKG2-B AND NKG2-BDTM)</scope>
</reference>
<proteinExistence type="evidence at transcript level"/>
<feature type="chain" id="PRO_0000046660" description="NKG2-A/NKG2-B type II integral membrane protein">
    <location>
        <begin position="1"/>
        <end position="233"/>
    </location>
</feature>
<feature type="topological domain" description="Cytoplasmic" evidence="2">
    <location>
        <begin position="1"/>
        <end position="70"/>
    </location>
</feature>
<feature type="transmembrane region" description="Helical; Signal-anchor for type II membrane protein" evidence="2">
    <location>
        <begin position="71"/>
        <end position="93"/>
    </location>
</feature>
<feature type="topological domain" description="Extracellular" evidence="2">
    <location>
        <begin position="94"/>
        <end position="233"/>
    </location>
</feature>
<feature type="domain" description="C-type lectin" evidence="3">
    <location>
        <begin position="118"/>
        <end position="231"/>
    </location>
</feature>
<feature type="region of interest" description="Disordered" evidence="4">
    <location>
        <begin position="1"/>
        <end position="28"/>
    </location>
</feature>
<feature type="short sequence motif" description="Immunoreceptor tyrosine-based inhibition motif (ITIM)" evidence="1">
    <location>
        <begin position="6"/>
        <end position="11"/>
    </location>
</feature>
<feature type="short sequence motif" description="Immunoreceptor tyrosine-based inhibition motif (ITIM)" evidence="1">
    <location>
        <begin position="38"/>
        <end position="43"/>
    </location>
</feature>
<feature type="modified residue" description="Phosphotyrosine" evidence="1">
    <location>
        <position position="8"/>
    </location>
</feature>
<feature type="modified residue" description="Phosphotyrosine" evidence="1">
    <location>
        <position position="40"/>
    </location>
</feature>
<feature type="glycosylation site" description="N-linked (GlcNAc...) asparagine" evidence="2">
    <location>
        <position position="102"/>
    </location>
</feature>
<feature type="glycosylation site" description="N-linked (GlcNAc...) asparagine" evidence="2">
    <location>
        <position position="103"/>
    </location>
</feature>
<feature type="glycosylation site" description="N-linked (GlcNAc...) asparagine" evidence="2">
    <location>
        <position position="151"/>
    </location>
</feature>
<feature type="disulfide bond" description="Interchain (with C-59 in KLRD1)" evidence="3">
    <location>
        <position position="116"/>
    </location>
</feature>
<feature type="disulfide bond" evidence="3">
    <location>
        <begin position="119"/>
        <end position="130"/>
    </location>
</feature>
<feature type="disulfide bond" evidence="3">
    <location>
        <begin position="147"/>
        <end position="229"/>
    </location>
</feature>
<feature type="disulfide bond" evidence="3">
    <location>
        <begin position="208"/>
        <end position="221"/>
    </location>
</feature>
<feature type="splice variant" id="VSP_003065" description="In isoform NKG2-Bdtm." evidence="5">
    <location>
        <begin position="63"/>
        <end position="112"/>
    </location>
</feature>
<feature type="splice variant" id="VSP_003063" description="In isoform NKG2-Adtm." evidence="5">
    <original>DLLSAPEKLIAGILGIICLVLMASVVTIVVIPS</original>
    <variation>A</variation>
    <location>
        <begin position="63"/>
        <end position="95"/>
    </location>
</feature>
<feature type="splice variant" id="VSP_003064" description="In isoform NKG2-B." evidence="5">
    <location>
        <begin position="96"/>
        <end position="113"/>
    </location>
</feature>
<sequence length="233" mass="26286">MDNQGVIYSDLNLPPNPKRQQQKPKGNTSSILVTEQEITYAELNLQKTSQDFQGNDKTNHCKDLLSAPEKLIAGILGIICLVLMASVVTIVVIPSTLTQKHNNSSLNTRTQKARHCGHCPEEWITYSNSCYYIGKEKRTWAESLLACTSKNSSLLSIDNEEEMKFLTAILTSSWIDVFRDSSHHPWVTINGLTFKHEIKESDHAEHNCAMLHVRGLFSDECGSSKIYHCKHKL</sequence>
<comment type="function">
    <text evidence="1">Immune inhibitory receptor involved in self-nonself discrimination. In complex with KLRD1 on cytotoxic and regulatory lymphocyte subsets, recognizes non-classical major histocompatibility (MHC) class Ib molecule MHC-E loaded with self-peptides derived from the signal sequence of classical MHC class Ia molecules. Enables cytotoxic cells to monitor the expression of MHC class I molecules in healthy cells and to tolerate self. Upon MHC-E-peptide binding, transmits intracellular signals through two immunoreceptor tyrosine-based inhibition motifs (ITIMs) by recruiting INPP5D/SHP-1 and INPPL1/SHP-2 tyrosine phosphatases to ITIMs, and ultimately opposing signals transmitted by activating receptors through dephosphorylation of proximal signaling molecules. Key inhibitory receptor on natural killer (NK) cells that regulates their activation and effector functions. Dominantly counteracts T cell receptor signaling on a subset of memory/effector CD8-positive T cells as part of an antigen-driven response to avoid autoimmunity. On intraepithelial CD8-positive gamma-delta regulatory T cells triggers TGFB1 secretion, which in turn limits the cytotoxic programming of intraepithelial CD8-positive alpha-beta T cells, distinguishing harmless from pathogenic antigens. In MHC-E-rich tumor microenvironment, acts as an immune inhibitory checkpoint and may contribute to progressive loss of effector functions of NK cells and tumor-specific T cells, a state known as cell exhaustion.</text>
</comment>
<comment type="subunit">
    <text evidence="1">Heterodimer with KLRD1; disulfide-linked. KLRD1-KLRC1 heterodimer interacts with peptide-bound MHC-E-B2M heterotrimeric complex. Competes with KLRC2 for its interaction with MHC-E. Interacts (via ITIM) with INPP5D/SHIP-1 and INPPL1/SHIP-2 (via SH2 domain).</text>
</comment>
<comment type="subcellular location">
    <subcellularLocation>
        <location evidence="1">Cell membrane</location>
        <topology evidence="2">Single-pass type II membrane protein</topology>
    </subcellularLocation>
</comment>
<comment type="alternative products">
    <event type="alternative splicing"/>
    <isoform>
        <id>Q9MZJ3-1</id>
        <name>NKG2-A</name>
        <sequence type="displayed"/>
    </isoform>
    <isoform>
        <id>Q9MZJ3-2</id>
        <name>NKG2-B</name>
        <sequence type="described" ref="VSP_003064"/>
    </isoform>
    <isoform>
        <id>Q9MZJ3-3</id>
        <name>NKG2-Adtm</name>
        <sequence type="described" ref="VSP_003063"/>
    </isoform>
    <isoform>
        <id>Q9MZJ3-4</id>
        <name>NKG2-Bdtm</name>
        <sequence type="described" ref="VSP_003065"/>
    </isoform>
</comment>
<comment type="tissue specificity">
    <text>Natural killer cells.</text>
</comment>
<comment type="domain">
    <text evidence="1">The cytosolic N-terminus contains two immunoreceptor tyrosine-based inhibitory motifs (ITIMs), which are essential for the association with INPP5D/SHIP-1 and INPPL1/SHIP-2 phosphatases and functional inhibition.</text>
</comment>
<comment type="PTM">
    <text evidence="1">Phosphorylated.</text>
</comment>